<comment type="function">
    <text evidence="1">Peptide chain release factor 1 directs the termination of translation in response to the peptide chain termination codons UAG and UAA.</text>
</comment>
<comment type="subcellular location">
    <subcellularLocation>
        <location evidence="1">Cytoplasm</location>
    </subcellularLocation>
</comment>
<comment type="PTM">
    <text evidence="1">Methylated by PrmC. Methylation increases the termination efficiency of RF1.</text>
</comment>
<comment type="similarity">
    <text evidence="1">Belongs to the prokaryotic/mitochondrial release factor family.</text>
</comment>
<protein>
    <recommendedName>
        <fullName evidence="1">Peptide chain release factor 1</fullName>
        <shortName evidence="1">RF-1</shortName>
    </recommendedName>
</protein>
<name>RF1_DINSH</name>
<feature type="chain" id="PRO_1000075494" description="Peptide chain release factor 1">
    <location>
        <begin position="1"/>
        <end position="351"/>
    </location>
</feature>
<feature type="modified residue" description="N5-methylglutamine" evidence="1">
    <location>
        <position position="229"/>
    </location>
</feature>
<keyword id="KW-0963">Cytoplasm</keyword>
<keyword id="KW-0488">Methylation</keyword>
<keyword id="KW-0648">Protein biosynthesis</keyword>
<keyword id="KW-1185">Reference proteome</keyword>
<organism>
    <name type="scientific">Dinoroseobacter shibae (strain DSM 16493 / NCIMB 14021 / DFL 12)</name>
    <dbReference type="NCBI Taxonomy" id="398580"/>
    <lineage>
        <taxon>Bacteria</taxon>
        <taxon>Pseudomonadati</taxon>
        <taxon>Pseudomonadota</taxon>
        <taxon>Alphaproteobacteria</taxon>
        <taxon>Rhodobacterales</taxon>
        <taxon>Roseobacteraceae</taxon>
        <taxon>Dinoroseobacter</taxon>
    </lineage>
</organism>
<dbReference type="EMBL" id="CP000830">
    <property type="protein sequence ID" value="ABV93475.1"/>
    <property type="molecule type" value="Genomic_DNA"/>
</dbReference>
<dbReference type="RefSeq" id="WP_012178405.1">
    <property type="nucleotide sequence ID" value="NC_009952.1"/>
</dbReference>
<dbReference type="SMR" id="A8LLU7"/>
<dbReference type="STRING" id="398580.Dshi_1733"/>
<dbReference type="KEGG" id="dsh:Dshi_1733"/>
<dbReference type="eggNOG" id="COG0216">
    <property type="taxonomic scope" value="Bacteria"/>
</dbReference>
<dbReference type="HOGENOM" id="CLU_036856_0_1_5"/>
<dbReference type="OrthoDB" id="9806673at2"/>
<dbReference type="Proteomes" id="UP000006833">
    <property type="component" value="Chromosome"/>
</dbReference>
<dbReference type="GO" id="GO:0005737">
    <property type="term" value="C:cytoplasm"/>
    <property type="evidence" value="ECO:0007669"/>
    <property type="project" value="UniProtKB-SubCell"/>
</dbReference>
<dbReference type="GO" id="GO:0016149">
    <property type="term" value="F:translation release factor activity, codon specific"/>
    <property type="evidence" value="ECO:0007669"/>
    <property type="project" value="UniProtKB-UniRule"/>
</dbReference>
<dbReference type="FunFam" id="3.30.160.20:FF:000004">
    <property type="entry name" value="Peptide chain release factor 1"/>
    <property type="match status" value="1"/>
</dbReference>
<dbReference type="FunFam" id="3.30.70.1660:FF:000002">
    <property type="entry name" value="Peptide chain release factor 1"/>
    <property type="match status" value="1"/>
</dbReference>
<dbReference type="FunFam" id="3.30.70.1660:FF:000004">
    <property type="entry name" value="Peptide chain release factor 1"/>
    <property type="match status" value="1"/>
</dbReference>
<dbReference type="Gene3D" id="3.30.160.20">
    <property type="match status" value="1"/>
</dbReference>
<dbReference type="Gene3D" id="3.30.70.1660">
    <property type="match status" value="1"/>
</dbReference>
<dbReference type="Gene3D" id="6.10.140.1950">
    <property type="match status" value="1"/>
</dbReference>
<dbReference type="HAMAP" id="MF_00093">
    <property type="entry name" value="Rel_fac_1"/>
    <property type="match status" value="1"/>
</dbReference>
<dbReference type="InterPro" id="IPR005139">
    <property type="entry name" value="PCRF"/>
</dbReference>
<dbReference type="InterPro" id="IPR000352">
    <property type="entry name" value="Pep_chain_release_fac_I"/>
</dbReference>
<dbReference type="InterPro" id="IPR045853">
    <property type="entry name" value="Pep_chain_release_fac_I_sf"/>
</dbReference>
<dbReference type="InterPro" id="IPR050057">
    <property type="entry name" value="Prokaryotic/Mito_RF"/>
</dbReference>
<dbReference type="InterPro" id="IPR004373">
    <property type="entry name" value="RF-1"/>
</dbReference>
<dbReference type="NCBIfam" id="TIGR00019">
    <property type="entry name" value="prfA"/>
    <property type="match status" value="1"/>
</dbReference>
<dbReference type="NCBIfam" id="NF001859">
    <property type="entry name" value="PRK00591.1"/>
    <property type="match status" value="1"/>
</dbReference>
<dbReference type="PANTHER" id="PTHR43804">
    <property type="entry name" value="LD18447P"/>
    <property type="match status" value="1"/>
</dbReference>
<dbReference type="PANTHER" id="PTHR43804:SF7">
    <property type="entry name" value="LD18447P"/>
    <property type="match status" value="1"/>
</dbReference>
<dbReference type="Pfam" id="PF03462">
    <property type="entry name" value="PCRF"/>
    <property type="match status" value="1"/>
</dbReference>
<dbReference type="Pfam" id="PF00472">
    <property type="entry name" value="RF-1"/>
    <property type="match status" value="1"/>
</dbReference>
<dbReference type="SMART" id="SM00937">
    <property type="entry name" value="PCRF"/>
    <property type="match status" value="1"/>
</dbReference>
<dbReference type="SUPFAM" id="SSF75620">
    <property type="entry name" value="Release factor"/>
    <property type="match status" value="1"/>
</dbReference>
<dbReference type="PROSITE" id="PS00745">
    <property type="entry name" value="RF_PROK_I"/>
    <property type="match status" value="1"/>
</dbReference>
<gene>
    <name evidence="1" type="primary">prfA</name>
    <name type="ordered locus">Dshi_1733</name>
</gene>
<sequence>MVPTEKLAQITERFEYIEARMAAGAAGEDIAALGREYAELKPVVAEIAAYSRARADLAEAEAMLDDPEMRALAEEEIPALKARIPEMEQALRLALLPKDAADARPAMIEIRPGTGGEEAALFAGDLLRMYQRYAEAQGWRFQIVSESLTELGGIKEVIAHVSGSGVFAKLKYESGVHRVQRVPVTESGGRIHTSAATVAVLPEAEAVDIDIPASDIRIDTMRASGAGGQHVNTTDSAVRITHIPTGLVVTSSEKSQHRNRDIAMQVLRARLYDLERQRADAERSAARKGQVGSGDRSERIRTYNFPQGRMTDHRINLTLYKLDQVMQGDLDEVIAALAADDQARLLAEVEG</sequence>
<evidence type="ECO:0000255" key="1">
    <source>
        <dbReference type="HAMAP-Rule" id="MF_00093"/>
    </source>
</evidence>
<reference key="1">
    <citation type="journal article" date="2010" name="ISME J.">
        <title>The complete genome sequence of the algal symbiont Dinoroseobacter shibae: a hitchhiker's guide to life in the sea.</title>
        <authorList>
            <person name="Wagner-Dobler I."/>
            <person name="Ballhausen B."/>
            <person name="Berger M."/>
            <person name="Brinkhoff T."/>
            <person name="Buchholz I."/>
            <person name="Bunk B."/>
            <person name="Cypionka H."/>
            <person name="Daniel R."/>
            <person name="Drepper T."/>
            <person name="Gerdts G."/>
            <person name="Hahnke S."/>
            <person name="Han C."/>
            <person name="Jahn D."/>
            <person name="Kalhoefer D."/>
            <person name="Kiss H."/>
            <person name="Klenk H.P."/>
            <person name="Kyrpides N."/>
            <person name="Liebl W."/>
            <person name="Liesegang H."/>
            <person name="Meincke L."/>
            <person name="Pati A."/>
            <person name="Petersen J."/>
            <person name="Piekarski T."/>
            <person name="Pommerenke C."/>
            <person name="Pradella S."/>
            <person name="Pukall R."/>
            <person name="Rabus R."/>
            <person name="Stackebrandt E."/>
            <person name="Thole S."/>
            <person name="Thompson L."/>
            <person name="Tielen P."/>
            <person name="Tomasch J."/>
            <person name="von Jan M."/>
            <person name="Wanphrut N."/>
            <person name="Wichels A."/>
            <person name="Zech H."/>
            <person name="Simon M."/>
        </authorList>
    </citation>
    <scope>NUCLEOTIDE SEQUENCE [LARGE SCALE GENOMIC DNA]</scope>
    <source>
        <strain>DSM 16493 / NCIMB 14021 / DFL 12</strain>
    </source>
</reference>
<proteinExistence type="inferred from homology"/>
<accession>A8LLU7</accession>